<keyword id="KW-1185">Reference proteome</keyword>
<organism>
    <name type="scientific">Mycolicibacterium paratuberculosis (strain ATCC BAA-968 / K-10)</name>
    <name type="common">Mycobacterium paratuberculosis</name>
    <dbReference type="NCBI Taxonomy" id="262316"/>
    <lineage>
        <taxon>Bacteria</taxon>
        <taxon>Bacillati</taxon>
        <taxon>Actinomycetota</taxon>
        <taxon>Actinomycetes</taxon>
        <taxon>Mycobacteriales</taxon>
        <taxon>Mycobacteriaceae</taxon>
        <taxon>Mycobacterium</taxon>
        <taxon>Mycobacterium avium complex (MAC)</taxon>
    </lineage>
</organism>
<name>CLPS_MYCPA</name>
<gene>
    <name evidence="1" type="primary">clpS</name>
    <name type="ordered locus">MAP_2429c</name>
</gene>
<sequence length="105" mass="11593">MVVMSAPTEPKSRPGTTGQRESAPEDVTASPWVTIVWDDPVNLMTYVTYVFQKLFGYSEPHATKLMLQVHNEGKAVVSAGSREAMEVDVSKLHAAGLWATMQQDR</sequence>
<comment type="function">
    <text evidence="1">Involved in the modulation of the specificity of the ClpAP-mediated ATP-dependent protein degradation.</text>
</comment>
<comment type="subunit">
    <text evidence="1">Binds to the N-terminal domain of the chaperone ClpA.</text>
</comment>
<comment type="similarity">
    <text evidence="1">Belongs to the ClpS family.</text>
</comment>
<reference key="1">
    <citation type="journal article" date="2005" name="Proc. Natl. Acad. Sci. U.S.A.">
        <title>The complete genome sequence of Mycobacterium avium subspecies paratuberculosis.</title>
        <authorList>
            <person name="Li L."/>
            <person name="Bannantine J.P."/>
            <person name="Zhang Q."/>
            <person name="Amonsin A."/>
            <person name="May B.J."/>
            <person name="Alt D."/>
            <person name="Banerji N."/>
            <person name="Kanjilal S."/>
            <person name="Kapur V."/>
        </authorList>
    </citation>
    <scope>NUCLEOTIDE SEQUENCE [LARGE SCALE GENOMIC DNA]</scope>
    <source>
        <strain>ATCC BAA-968 / K-10</strain>
    </source>
</reference>
<dbReference type="EMBL" id="AE016958">
    <property type="protein sequence ID" value="AAS04746.1"/>
    <property type="molecule type" value="Genomic_DNA"/>
</dbReference>
<dbReference type="RefSeq" id="WP_010949598.1">
    <property type="nucleotide sequence ID" value="NZ_CP106873.1"/>
</dbReference>
<dbReference type="SMR" id="Q73X80"/>
<dbReference type="STRING" id="262316.MAP_2429c"/>
<dbReference type="GeneID" id="75269317"/>
<dbReference type="KEGG" id="mpa:MAP_2429c"/>
<dbReference type="eggNOG" id="COG2127">
    <property type="taxonomic scope" value="Bacteria"/>
</dbReference>
<dbReference type="HOGENOM" id="CLU_153743_1_0_11"/>
<dbReference type="Proteomes" id="UP000000580">
    <property type="component" value="Chromosome"/>
</dbReference>
<dbReference type="GO" id="GO:0030163">
    <property type="term" value="P:protein catabolic process"/>
    <property type="evidence" value="ECO:0007669"/>
    <property type="project" value="InterPro"/>
</dbReference>
<dbReference type="GO" id="GO:0006508">
    <property type="term" value="P:proteolysis"/>
    <property type="evidence" value="ECO:0007669"/>
    <property type="project" value="UniProtKB-UniRule"/>
</dbReference>
<dbReference type="FunFam" id="3.30.1390.10:FF:000004">
    <property type="entry name" value="ATP-dependent Clp protease adapter protein ClpS"/>
    <property type="match status" value="1"/>
</dbReference>
<dbReference type="Gene3D" id="3.30.1390.10">
    <property type="match status" value="1"/>
</dbReference>
<dbReference type="HAMAP" id="MF_00302">
    <property type="entry name" value="ClpS"/>
    <property type="match status" value="1"/>
</dbReference>
<dbReference type="InterPro" id="IPR022935">
    <property type="entry name" value="ClpS"/>
</dbReference>
<dbReference type="InterPro" id="IPR003769">
    <property type="entry name" value="ClpS_core"/>
</dbReference>
<dbReference type="InterPro" id="IPR014719">
    <property type="entry name" value="Ribosomal_bL12_C/ClpS-like"/>
</dbReference>
<dbReference type="NCBIfam" id="NF000668">
    <property type="entry name" value="PRK00033.1-1"/>
    <property type="match status" value="1"/>
</dbReference>
<dbReference type="PANTHER" id="PTHR33473:SF19">
    <property type="entry name" value="ATP-DEPENDENT CLP PROTEASE ADAPTER PROTEIN CLPS"/>
    <property type="match status" value="1"/>
</dbReference>
<dbReference type="PANTHER" id="PTHR33473">
    <property type="entry name" value="ATP-DEPENDENT CLP PROTEASE ADAPTER PROTEIN CLPS1, CHLOROPLASTIC"/>
    <property type="match status" value="1"/>
</dbReference>
<dbReference type="Pfam" id="PF02617">
    <property type="entry name" value="ClpS"/>
    <property type="match status" value="1"/>
</dbReference>
<dbReference type="SUPFAM" id="SSF54736">
    <property type="entry name" value="ClpS-like"/>
    <property type="match status" value="1"/>
</dbReference>
<accession>Q73X80</accession>
<feature type="chain" id="PRO_0000215725" description="ATP-dependent Clp protease adapter protein ClpS">
    <location>
        <begin position="1"/>
        <end position="105"/>
    </location>
</feature>
<feature type="region of interest" description="Disordered" evidence="2">
    <location>
        <begin position="1"/>
        <end position="27"/>
    </location>
</feature>
<evidence type="ECO:0000255" key="1">
    <source>
        <dbReference type="HAMAP-Rule" id="MF_00302"/>
    </source>
</evidence>
<evidence type="ECO:0000256" key="2">
    <source>
        <dbReference type="SAM" id="MobiDB-lite"/>
    </source>
</evidence>
<proteinExistence type="inferred from homology"/>
<protein>
    <recommendedName>
        <fullName evidence="1">ATP-dependent Clp protease adapter protein ClpS</fullName>
    </recommendedName>
</protein>